<reference key="1">
    <citation type="journal article" date="2004" name="Proc. Natl. Acad. Sci. U.S.A.">
        <title>Insights into the evolution of Yersinia pestis through whole-genome comparison with Yersinia pseudotuberculosis.</title>
        <authorList>
            <person name="Chain P.S.G."/>
            <person name="Carniel E."/>
            <person name="Larimer F.W."/>
            <person name="Lamerdin J."/>
            <person name="Stoutland P.O."/>
            <person name="Regala W.M."/>
            <person name="Georgescu A.M."/>
            <person name="Vergez L.M."/>
            <person name="Land M.L."/>
            <person name="Motin V.L."/>
            <person name="Brubaker R.R."/>
            <person name="Fowler J."/>
            <person name="Hinnebusch J."/>
            <person name="Marceau M."/>
            <person name="Medigue C."/>
            <person name="Simonet M."/>
            <person name="Chenal-Francisque V."/>
            <person name="Souza B."/>
            <person name="Dacheux D."/>
            <person name="Elliott J.M."/>
            <person name="Derbise A."/>
            <person name="Hauser L.J."/>
            <person name="Garcia E."/>
        </authorList>
    </citation>
    <scope>NUCLEOTIDE SEQUENCE [LARGE SCALE GENOMIC DNA]</scope>
    <source>
        <strain>IP32953</strain>
    </source>
</reference>
<name>GPH_YERPS</name>
<sequence length="232" mass="24589">MVKFKAIRGVAFDLDGTLVDSAPGLARAIDMALAHQGLPAAGEALVSTWIGNGADVLVERALHWAGREHNAQLVAQTRELFDHYYAKTVEQGSQLFPQVKATLAQLAANGLPIGLITNKPTPFVAPLLTSLGIADYFSVIIGGDDVVVKKPHPAPLYLLLGKLGLHAREMLFVGDSRNDIMAAQAAGCPCIGLTYGYNYGEAIATSHPDCVLAHFADLLPAIGLPSLKDQEV</sequence>
<dbReference type="EC" id="3.1.3.18" evidence="1"/>
<dbReference type="EMBL" id="BX936398">
    <property type="protein sequence ID" value="CAH22983.1"/>
    <property type="status" value="ALT_INIT"/>
    <property type="molecule type" value="Genomic_DNA"/>
</dbReference>
<dbReference type="RefSeq" id="WP_011193233.1">
    <property type="nucleotide sequence ID" value="NC_006155.1"/>
</dbReference>
<dbReference type="SMR" id="Q664M4"/>
<dbReference type="GeneID" id="49784261"/>
<dbReference type="KEGG" id="ypo:BZ17_2841"/>
<dbReference type="KEGG" id="yps:YPTB3745"/>
<dbReference type="PATRIC" id="fig|273123.14.peg.2981"/>
<dbReference type="UniPathway" id="UPA00865">
    <property type="reaction ID" value="UER00834"/>
</dbReference>
<dbReference type="Proteomes" id="UP000001011">
    <property type="component" value="Chromosome"/>
</dbReference>
<dbReference type="GO" id="GO:0005829">
    <property type="term" value="C:cytosol"/>
    <property type="evidence" value="ECO:0007669"/>
    <property type="project" value="TreeGrafter"/>
</dbReference>
<dbReference type="GO" id="GO:0046872">
    <property type="term" value="F:metal ion binding"/>
    <property type="evidence" value="ECO:0007669"/>
    <property type="project" value="UniProtKB-KW"/>
</dbReference>
<dbReference type="GO" id="GO:0008967">
    <property type="term" value="F:phosphoglycolate phosphatase activity"/>
    <property type="evidence" value="ECO:0007669"/>
    <property type="project" value="UniProtKB-UniRule"/>
</dbReference>
<dbReference type="GO" id="GO:0005975">
    <property type="term" value="P:carbohydrate metabolic process"/>
    <property type="evidence" value="ECO:0007669"/>
    <property type="project" value="InterPro"/>
</dbReference>
<dbReference type="GO" id="GO:0006281">
    <property type="term" value="P:DNA repair"/>
    <property type="evidence" value="ECO:0007669"/>
    <property type="project" value="TreeGrafter"/>
</dbReference>
<dbReference type="GO" id="GO:0046295">
    <property type="term" value="P:glycolate biosynthetic process"/>
    <property type="evidence" value="ECO:0007669"/>
    <property type="project" value="UniProtKB-UniRule"/>
</dbReference>
<dbReference type="CDD" id="cd16417">
    <property type="entry name" value="HAD_PGPase"/>
    <property type="match status" value="1"/>
</dbReference>
<dbReference type="FunFam" id="3.40.50.1000:FF:000022">
    <property type="entry name" value="Phosphoglycolate phosphatase"/>
    <property type="match status" value="1"/>
</dbReference>
<dbReference type="Gene3D" id="3.40.50.1000">
    <property type="entry name" value="HAD superfamily/HAD-like"/>
    <property type="match status" value="1"/>
</dbReference>
<dbReference type="Gene3D" id="1.10.150.240">
    <property type="entry name" value="Putative phosphatase, domain 2"/>
    <property type="match status" value="1"/>
</dbReference>
<dbReference type="HAMAP" id="MF_00495">
    <property type="entry name" value="GPH_hydrolase_bact"/>
    <property type="match status" value="1"/>
</dbReference>
<dbReference type="InterPro" id="IPR050155">
    <property type="entry name" value="HAD-like_hydrolase_sf"/>
</dbReference>
<dbReference type="InterPro" id="IPR036412">
    <property type="entry name" value="HAD-like_sf"/>
</dbReference>
<dbReference type="InterPro" id="IPR006439">
    <property type="entry name" value="HAD-SF_hydro_IA"/>
</dbReference>
<dbReference type="InterPro" id="IPR041492">
    <property type="entry name" value="HAD_2"/>
</dbReference>
<dbReference type="InterPro" id="IPR023214">
    <property type="entry name" value="HAD_sf"/>
</dbReference>
<dbReference type="InterPro" id="IPR023198">
    <property type="entry name" value="PGP-like_dom2"/>
</dbReference>
<dbReference type="InterPro" id="IPR037512">
    <property type="entry name" value="PGPase_prok"/>
</dbReference>
<dbReference type="NCBIfam" id="TIGR01549">
    <property type="entry name" value="HAD-SF-IA-v1"/>
    <property type="match status" value="1"/>
</dbReference>
<dbReference type="NCBIfam" id="TIGR01509">
    <property type="entry name" value="HAD-SF-IA-v3"/>
    <property type="match status" value="1"/>
</dbReference>
<dbReference type="NCBIfam" id="TIGR01449">
    <property type="entry name" value="PGP_bact"/>
    <property type="match status" value="1"/>
</dbReference>
<dbReference type="NCBIfam" id="NF009695">
    <property type="entry name" value="PRK13222.1-2"/>
    <property type="match status" value="1"/>
</dbReference>
<dbReference type="NCBIfam" id="NF009697">
    <property type="entry name" value="PRK13222.1-4"/>
    <property type="match status" value="1"/>
</dbReference>
<dbReference type="PANTHER" id="PTHR43434">
    <property type="entry name" value="PHOSPHOGLYCOLATE PHOSPHATASE"/>
    <property type="match status" value="1"/>
</dbReference>
<dbReference type="PANTHER" id="PTHR43434:SF1">
    <property type="entry name" value="PHOSPHOGLYCOLATE PHOSPHATASE"/>
    <property type="match status" value="1"/>
</dbReference>
<dbReference type="Pfam" id="PF13419">
    <property type="entry name" value="HAD_2"/>
    <property type="match status" value="1"/>
</dbReference>
<dbReference type="PRINTS" id="PR00413">
    <property type="entry name" value="HADHALOGNASE"/>
</dbReference>
<dbReference type="SFLD" id="SFLDG01135">
    <property type="entry name" value="C1.5.6:_HAD__Beta-PGM__Phospha"/>
    <property type="match status" value="1"/>
</dbReference>
<dbReference type="SFLD" id="SFLDG01129">
    <property type="entry name" value="C1.5:_HAD__Beta-PGM__Phosphata"/>
    <property type="match status" value="1"/>
</dbReference>
<dbReference type="SUPFAM" id="SSF56784">
    <property type="entry name" value="HAD-like"/>
    <property type="match status" value="1"/>
</dbReference>
<accession>Q664M4</accession>
<evidence type="ECO:0000255" key="1">
    <source>
        <dbReference type="HAMAP-Rule" id="MF_00495"/>
    </source>
</evidence>
<evidence type="ECO:0000305" key="2"/>
<proteinExistence type="inferred from homology"/>
<gene>
    <name type="ordered locus">YPTB3745</name>
</gene>
<organism>
    <name type="scientific">Yersinia pseudotuberculosis serotype I (strain IP32953)</name>
    <dbReference type="NCBI Taxonomy" id="273123"/>
    <lineage>
        <taxon>Bacteria</taxon>
        <taxon>Pseudomonadati</taxon>
        <taxon>Pseudomonadota</taxon>
        <taxon>Gammaproteobacteria</taxon>
        <taxon>Enterobacterales</taxon>
        <taxon>Yersiniaceae</taxon>
        <taxon>Yersinia</taxon>
    </lineage>
</organism>
<comment type="function">
    <text evidence="1">Specifically catalyzes the dephosphorylation of 2-phosphoglycolate. Is involved in the dissimilation of the intracellular 2-phosphoglycolate formed during the DNA repair of 3'-phosphoglycolate ends, a major class of DNA lesions induced by oxidative stress.</text>
</comment>
<comment type="catalytic activity">
    <reaction evidence="1">
        <text>2-phosphoglycolate + H2O = glycolate + phosphate</text>
        <dbReference type="Rhea" id="RHEA:14369"/>
        <dbReference type="ChEBI" id="CHEBI:15377"/>
        <dbReference type="ChEBI" id="CHEBI:29805"/>
        <dbReference type="ChEBI" id="CHEBI:43474"/>
        <dbReference type="ChEBI" id="CHEBI:58033"/>
        <dbReference type="EC" id="3.1.3.18"/>
    </reaction>
</comment>
<comment type="cofactor">
    <cofactor evidence="1">
        <name>Mg(2+)</name>
        <dbReference type="ChEBI" id="CHEBI:18420"/>
    </cofactor>
</comment>
<comment type="cofactor">
    <cofactor evidence="1">
        <name>chloride</name>
        <dbReference type="ChEBI" id="CHEBI:17996"/>
    </cofactor>
</comment>
<comment type="pathway">
    <text evidence="1">Organic acid metabolism; glycolate biosynthesis; glycolate from 2-phosphoglycolate: step 1/1.</text>
</comment>
<comment type="subunit">
    <text evidence="1">Monomer.</text>
</comment>
<comment type="similarity">
    <text evidence="1">Belongs to the HAD-like hydrolase superfamily. CbbY/CbbZ/Gph/YieH family.</text>
</comment>
<comment type="sequence caution" evidence="2">
    <conflict type="erroneous initiation">
        <sequence resource="EMBL-CDS" id="CAH22983"/>
    </conflict>
    <text>Extended N-terminus.</text>
</comment>
<protein>
    <recommendedName>
        <fullName evidence="1">Phosphoglycolate phosphatase</fullName>
        <shortName evidence="1">PGP</shortName>
        <shortName evidence="1">PGPase</shortName>
        <ecNumber evidence="1">3.1.3.18</ecNumber>
    </recommendedName>
</protein>
<keyword id="KW-0119">Carbohydrate metabolism</keyword>
<keyword id="KW-0868">Chloride</keyword>
<keyword id="KW-0378">Hydrolase</keyword>
<keyword id="KW-0460">Magnesium</keyword>
<keyword id="KW-0479">Metal-binding</keyword>
<feature type="chain" id="PRO_0000238184" description="Phosphoglycolate phosphatase">
    <location>
        <begin position="1"/>
        <end position="232"/>
    </location>
</feature>
<feature type="active site" description="Nucleophile" evidence="1">
    <location>
        <position position="13"/>
    </location>
</feature>
<feature type="binding site" evidence="1">
    <location>
        <position position="13"/>
    </location>
    <ligand>
        <name>Mg(2+)</name>
        <dbReference type="ChEBI" id="CHEBI:18420"/>
    </ligand>
</feature>
<feature type="binding site" evidence="1">
    <location>
        <position position="15"/>
    </location>
    <ligand>
        <name>Mg(2+)</name>
        <dbReference type="ChEBI" id="CHEBI:18420"/>
    </ligand>
</feature>
<feature type="binding site" evidence="1">
    <location>
        <position position="175"/>
    </location>
    <ligand>
        <name>Mg(2+)</name>
        <dbReference type="ChEBI" id="CHEBI:18420"/>
    </ligand>
</feature>